<sequence>MGTLRAILKNPDDLYPLIKLKLAARHAEKQIPPEPHWGFCYLMLQKVSRSFALVIQQLPVELRDAVCIFYLVLRALDTVEDDTSIPTDVKVPILISFHQHVYDREWHFACGTKEYKVLMDQFHHVSTAFLELGKLYQQAIEDITMRMGAGMAKFICKEVETTDDYDEYCHYVAGLVGLGLSKLFHASGKEDLASDSLSNSMGLFLQKTNIIRDYLEDINEVPKCRMFWPREIWSKYVNKLEDLKYEENSVKAVQCLNDMVTNALSHVEDCLTYMFNLHDPAIFRFCAIPQVMAIGTLAMCYDNIEVFRGVVKMRRGLTAKVIDRTKTMADVYGAFFDFSCMLKSKVNNNDPNATKTLKRLDAILKTCRDSGTLNKRKSYIIRNEPNYSPVLIVVIFIILAIILAQLFGSRS</sequence>
<keyword id="KW-0460">Magnesium</keyword>
<keyword id="KW-0472">Membrane</keyword>
<keyword id="KW-0479">Metal-binding</keyword>
<keyword id="KW-0520">NAD</keyword>
<keyword id="KW-0521">NADP</keyword>
<keyword id="KW-1185">Reference proteome</keyword>
<keyword id="KW-0808">Transferase</keyword>
<keyword id="KW-0812">Transmembrane</keyword>
<keyword id="KW-1133">Transmembrane helix</keyword>
<organism>
    <name type="scientific">Solanum lycopersicum</name>
    <name type="common">Tomato</name>
    <name type="synonym">Lycopersicon esculentum</name>
    <dbReference type="NCBI Taxonomy" id="4081"/>
    <lineage>
        <taxon>Eukaryota</taxon>
        <taxon>Viridiplantae</taxon>
        <taxon>Streptophyta</taxon>
        <taxon>Embryophyta</taxon>
        <taxon>Tracheophyta</taxon>
        <taxon>Spermatophyta</taxon>
        <taxon>Magnoliopsida</taxon>
        <taxon>eudicotyledons</taxon>
        <taxon>Gunneridae</taxon>
        <taxon>Pentapetalae</taxon>
        <taxon>asterids</taxon>
        <taxon>lamiids</taxon>
        <taxon>Solanales</taxon>
        <taxon>Solanaceae</taxon>
        <taxon>Solanoideae</taxon>
        <taxon>Solaneae</taxon>
        <taxon>Solanum</taxon>
        <taxon>Solanum subgen. Lycopersicon</taxon>
    </lineage>
</organism>
<gene>
    <name evidence="5" type="primary">SS</name>
</gene>
<evidence type="ECO:0000250" key="1">
    <source>
        <dbReference type="UniProtKB" id="P37268"/>
    </source>
</evidence>
<evidence type="ECO:0000255" key="2"/>
<evidence type="ECO:0000269" key="3">
    <source>
    </source>
</evidence>
<evidence type="ECO:0000303" key="4">
    <source>
    </source>
</evidence>
<evidence type="ECO:0000305" key="5"/>
<proteinExistence type="evidence at protein level"/>
<accession>D0VFU8</accession>
<comment type="function">
    <text evidence="3">Converts farnesyl diphosphate (FPP) into squalene, a precursor for sterol biosynthesis in eukaryotes.</text>
</comment>
<comment type="catalytic activity">
    <reaction evidence="3">
        <text>2 (2E,6E)-farnesyl diphosphate + NADH + H(+) = squalene + 2 diphosphate + NAD(+)</text>
        <dbReference type="Rhea" id="RHEA:32299"/>
        <dbReference type="ChEBI" id="CHEBI:15378"/>
        <dbReference type="ChEBI" id="CHEBI:15440"/>
        <dbReference type="ChEBI" id="CHEBI:33019"/>
        <dbReference type="ChEBI" id="CHEBI:57540"/>
        <dbReference type="ChEBI" id="CHEBI:57945"/>
        <dbReference type="ChEBI" id="CHEBI:175763"/>
        <dbReference type="EC" id="2.5.1.21"/>
    </reaction>
</comment>
<comment type="catalytic activity">
    <reaction evidence="3">
        <text>2 (2E,6E)-farnesyl diphosphate + NADPH + H(+) = squalene + 2 diphosphate + NADP(+)</text>
        <dbReference type="Rhea" id="RHEA:32295"/>
        <dbReference type="ChEBI" id="CHEBI:15378"/>
        <dbReference type="ChEBI" id="CHEBI:15440"/>
        <dbReference type="ChEBI" id="CHEBI:33019"/>
        <dbReference type="ChEBI" id="CHEBI:57783"/>
        <dbReference type="ChEBI" id="CHEBI:58349"/>
        <dbReference type="ChEBI" id="CHEBI:175763"/>
        <dbReference type="EC" id="2.5.1.21"/>
    </reaction>
</comment>
<comment type="cofactor">
    <cofactor evidence="1">
        <name>Mg(2+)</name>
        <dbReference type="ChEBI" id="CHEBI:18420"/>
    </cofactor>
</comment>
<comment type="subcellular location">
    <subcellularLocation>
        <location evidence="2">Membrane</location>
        <topology evidence="2">Single-pass membrane protein</topology>
    </subcellularLocation>
</comment>
<comment type="similarity">
    <text evidence="5">Belongs to the phytoene/squalene synthase family.</text>
</comment>
<feature type="chain" id="PRO_0000446506" description="Squalene synthase">
    <location>
        <begin position="1"/>
        <end position="411"/>
    </location>
</feature>
<feature type="transmembrane region" description="Helical" evidence="2">
    <location>
        <begin position="388"/>
        <end position="408"/>
    </location>
</feature>
<feature type="binding site" evidence="1">
    <location>
        <position position="49"/>
    </location>
    <ligand>
        <name>NADP(+)</name>
        <dbReference type="ChEBI" id="CHEBI:58349"/>
    </ligand>
</feature>
<feature type="binding site" evidence="1">
    <location>
        <position position="74"/>
    </location>
    <ligand>
        <name>NADP(+)</name>
        <dbReference type="ChEBI" id="CHEBI:58349"/>
    </ligand>
</feature>
<feature type="binding site" evidence="1">
    <location>
        <position position="77"/>
    </location>
    <ligand>
        <name>Mg(2+)</name>
        <dbReference type="ChEBI" id="CHEBI:18420"/>
    </ligand>
</feature>
<feature type="binding site" evidence="1">
    <location>
        <position position="80"/>
    </location>
    <ligand>
        <name>Mg(2+)</name>
        <dbReference type="ChEBI" id="CHEBI:18420"/>
    </ligand>
</feature>
<feature type="binding site" evidence="1">
    <location>
        <position position="81"/>
    </location>
    <ligand>
        <name>Mg(2+)</name>
        <dbReference type="ChEBI" id="CHEBI:18420"/>
    </ligand>
</feature>
<feature type="binding site" evidence="1">
    <location>
        <position position="212"/>
    </location>
    <ligand>
        <name>NADP(+)</name>
        <dbReference type="ChEBI" id="CHEBI:58349"/>
    </ligand>
</feature>
<feature type="binding site" evidence="1">
    <location>
        <position position="312"/>
    </location>
    <ligand>
        <name>NADP(+)</name>
        <dbReference type="ChEBI" id="CHEBI:58349"/>
    </ligand>
</feature>
<feature type="binding site" evidence="1">
    <location>
        <position position="314"/>
    </location>
    <ligand>
        <name>NADP(+)</name>
        <dbReference type="ChEBI" id="CHEBI:58349"/>
    </ligand>
</feature>
<name>SLSS_SOLLC</name>
<reference key="1">
    <citation type="journal article" date="2016" name="Nat. Commun.">
        <title>A squalene synthase-like enzyme initiates production of tetraterpenoid hydrocarbons in Botryococcus braunii Race L.</title>
        <authorList>
            <person name="Thapa H.R."/>
            <person name="Naik M.T."/>
            <person name="Okada S."/>
            <person name="Takada K."/>
            <person name="Molnar I."/>
            <person name="Xu Y."/>
            <person name="Devarenne T.P."/>
        </authorList>
    </citation>
    <scope>NUCLEOTIDE SEQUENCE [MRNA]</scope>
    <scope>FUNCTION</scope>
    <scope>CATALYTIC ACTIVITY</scope>
</reference>
<dbReference type="EC" id="2.5.1.21" evidence="3"/>
<dbReference type="EMBL" id="GU075687">
    <property type="protein sequence ID" value="ACY25092.1"/>
    <property type="molecule type" value="mRNA"/>
</dbReference>
<dbReference type="SMR" id="D0VFU8"/>
<dbReference type="FunCoup" id="D0VFU8">
    <property type="interactions" value="2979"/>
</dbReference>
<dbReference type="STRING" id="4081.D0VFU8"/>
<dbReference type="PaxDb" id="4081-Solyc01g110290.2.1"/>
<dbReference type="InParanoid" id="D0VFU8"/>
<dbReference type="Proteomes" id="UP000004994">
    <property type="component" value="Unplaced"/>
</dbReference>
<dbReference type="ExpressionAtlas" id="D0VFU8">
    <property type="expression patterns" value="baseline and differential"/>
</dbReference>
<dbReference type="GO" id="GO:0005789">
    <property type="term" value="C:endoplasmic reticulum membrane"/>
    <property type="evidence" value="ECO:0000318"/>
    <property type="project" value="GO_Central"/>
</dbReference>
<dbReference type="GO" id="GO:0046872">
    <property type="term" value="F:metal ion binding"/>
    <property type="evidence" value="ECO:0007669"/>
    <property type="project" value="UniProtKB-KW"/>
</dbReference>
<dbReference type="GO" id="GO:0051996">
    <property type="term" value="F:squalene synthase [NAD(P)H] activity"/>
    <property type="evidence" value="ECO:0000314"/>
    <property type="project" value="UniProtKB"/>
</dbReference>
<dbReference type="GO" id="GO:0045338">
    <property type="term" value="P:farnesyl diphosphate metabolic process"/>
    <property type="evidence" value="ECO:0000318"/>
    <property type="project" value="GO_Central"/>
</dbReference>
<dbReference type="GO" id="GO:0016126">
    <property type="term" value="P:sterol biosynthetic process"/>
    <property type="evidence" value="ECO:0000314"/>
    <property type="project" value="UniProtKB"/>
</dbReference>
<dbReference type="CDD" id="cd00683">
    <property type="entry name" value="Trans_IPPS_HH"/>
    <property type="match status" value="1"/>
</dbReference>
<dbReference type="FunFam" id="1.10.600.10:FF:000012">
    <property type="entry name" value="Squalene synthase 1"/>
    <property type="match status" value="1"/>
</dbReference>
<dbReference type="Gene3D" id="1.10.600.10">
    <property type="entry name" value="Farnesyl Diphosphate Synthase"/>
    <property type="match status" value="1"/>
</dbReference>
<dbReference type="InterPro" id="IPR008949">
    <property type="entry name" value="Isoprenoid_synthase_dom_sf"/>
</dbReference>
<dbReference type="InterPro" id="IPR002060">
    <property type="entry name" value="Squ/phyt_synthse"/>
</dbReference>
<dbReference type="InterPro" id="IPR006449">
    <property type="entry name" value="Squal_synth-like"/>
</dbReference>
<dbReference type="InterPro" id="IPR019845">
    <property type="entry name" value="Squalene/phytoene_synthase_CS"/>
</dbReference>
<dbReference type="InterPro" id="IPR044844">
    <property type="entry name" value="Trans_IPPS_euk-type"/>
</dbReference>
<dbReference type="InterPro" id="IPR033904">
    <property type="entry name" value="Trans_IPPS_HH"/>
</dbReference>
<dbReference type="NCBIfam" id="TIGR01559">
    <property type="entry name" value="squal_synth"/>
    <property type="match status" value="1"/>
</dbReference>
<dbReference type="PANTHER" id="PTHR11626">
    <property type="entry name" value="FARNESYL-DIPHOSPHATE FARNESYLTRANSFERASE"/>
    <property type="match status" value="1"/>
</dbReference>
<dbReference type="PANTHER" id="PTHR11626:SF2">
    <property type="entry name" value="SQUALENE SYNTHASE"/>
    <property type="match status" value="1"/>
</dbReference>
<dbReference type="Pfam" id="PF00494">
    <property type="entry name" value="SQS_PSY"/>
    <property type="match status" value="1"/>
</dbReference>
<dbReference type="SFLD" id="SFLDS00005">
    <property type="entry name" value="Isoprenoid_Synthase_Type_I"/>
    <property type="match status" value="1"/>
</dbReference>
<dbReference type="SFLD" id="SFLDG01018">
    <property type="entry name" value="Squalene/Phytoene_Synthase_Lik"/>
    <property type="match status" value="1"/>
</dbReference>
<dbReference type="SUPFAM" id="SSF48576">
    <property type="entry name" value="Terpenoid synthases"/>
    <property type="match status" value="1"/>
</dbReference>
<dbReference type="PROSITE" id="PS01044">
    <property type="entry name" value="SQUALEN_PHYTOEN_SYN_1"/>
    <property type="match status" value="1"/>
</dbReference>
<dbReference type="PROSITE" id="PS01045">
    <property type="entry name" value="SQUALEN_PHYTOEN_SYN_2"/>
    <property type="match status" value="1"/>
</dbReference>
<protein>
    <recommendedName>
        <fullName evidence="4">Squalene synthase</fullName>
        <shortName evidence="4">SlSS</shortName>
        <ecNumber evidence="3">2.5.1.21</ecNumber>
    </recommendedName>
</protein>